<keyword id="KW-0614">Plasmid</keyword>
<organism>
    <name type="scientific">Streptomyces lividans</name>
    <dbReference type="NCBI Taxonomy" id="1916"/>
    <lineage>
        <taxon>Bacteria</taxon>
        <taxon>Bacillati</taxon>
        <taxon>Actinomycetota</taxon>
        <taxon>Actinomycetes</taxon>
        <taxon>Kitasatosporales</taxon>
        <taxon>Streptomycetaceae</taxon>
        <taxon>Streptomyces</taxon>
    </lineage>
</organism>
<feature type="chain" id="PRO_0000084305" description="Protein KilB">
    <location>
        <begin position="1"/>
        <end position="147"/>
    </location>
</feature>
<feature type="region of interest" description="Hydrophobic">
    <location>
        <begin position="1"/>
        <end position="20"/>
    </location>
</feature>
<proteinExistence type="predicted"/>
<protein>
    <recommendedName>
        <fullName>Protein KilB</fullName>
    </recommendedName>
</protein>
<sequence>MVTTLIAVIGTLAGTGLAGLLQHRTARTTRDDSRRDAAVQAVAALAAALADHRRAMWVREDLRLTGASPEAYEAARTESHATRSAITAPLTTVSVLAPALAPAATAAAQAAYDLRAAADRTALTTDRDRAMAAADGLVAAAARRFGA</sequence>
<accession>P22403</accession>
<reference key="1">
    <citation type="journal article" date="1988" name="J. Bacteriol.">
        <title>Complete nucleotide sequence of the Streptomyces lividans plasmid pIJ101 and correlation of the sequence with genetic properties.</title>
        <authorList>
            <person name="Kendall K.J."/>
            <person name="Cohen S.N."/>
        </authorList>
    </citation>
    <scope>NUCLEOTIDE SEQUENCE [GENOMIC DNA]</scope>
</reference>
<comment type="function">
    <text>Involved in plasmid transfer.</text>
</comment>
<gene>
    <name type="primary">kilB</name>
</gene>
<geneLocation type="plasmid">
    <name>pIJ101</name>
</geneLocation>
<name>KILB_STRLI</name>
<dbReference type="EMBL" id="M21778">
    <property type="protein sequence ID" value="AAA88406.1"/>
    <property type="molecule type" value="Genomic_DNA"/>
</dbReference>
<dbReference type="PIR" id="C31844">
    <property type="entry name" value="C31844"/>
</dbReference>
<dbReference type="RefSeq" id="NP_040443.1">
    <property type="nucleotide sequence ID" value="NC_001387.1"/>
</dbReference>
<dbReference type="RefSeq" id="WP_010889915.1">
    <property type="nucleotide sequence ID" value="NC_001387.1"/>
</dbReference>